<keyword id="KW-0217">Developmental protein</keyword>
<keyword id="KW-0221">Differentiation</keyword>
<keyword id="KW-0479">Metal-binding</keyword>
<keyword id="KW-0539">Nucleus</keyword>
<keyword id="KW-1185">Reference proteome</keyword>
<keyword id="KW-0862">Zinc</keyword>
<keyword id="KW-0863">Zinc-finger</keyword>
<comment type="function">
    <text evidence="3 4">Regulates floral organ identity and cell proliferation in the inner floral whorls. Probably specifies the identities of lodicule and stamen through positive regulation of MADS16 expression. May contribute to morphogenesis by suppressing OSH1 expression in the lateral organs.</text>
</comment>
<comment type="subcellular location">
    <subcellularLocation>
        <location evidence="3 4">Nucleus</location>
    </subcellularLocation>
</comment>
<comment type="tissue specificity">
    <text evidence="3 4">Expressed in leaf primordia, inflorescence meristem, rachis branch meristems, floral meristem and floral organ primordia.</text>
</comment>
<comment type="disruption phenotype">
    <text evidence="3 4">Male sterility. Increased number of inflorescence branches, modified floral organ identities, flowers with varied numbers of inner floral organs and amorphous tissues without floral organ identity in whorls 3 and 4. Malformation of leaf blades until the fourth-leaf stage.</text>
</comment>
<comment type="sequence caution" evidence="5">
    <conflict type="erroneous gene model prediction">
        <sequence resource="EMBL-CDS" id="BAH90889"/>
    </conflict>
</comment>
<protein>
    <recommendedName>
        <fullName>Zinc finger protein STAMENLESS 1</fullName>
    </recommendedName>
    <alternativeName>
        <fullName>OsJAG</fullName>
    </alternativeName>
    <alternativeName>
        <fullName>Zinc finger protein OPEN BEAK</fullName>
    </alternativeName>
</protein>
<dbReference type="EMBL" id="AB297789">
    <property type="protein sequence ID" value="BAH09094.1"/>
    <property type="molecule type" value="mRNA"/>
</dbReference>
<dbReference type="EMBL" id="EU443151">
    <property type="protein sequence ID" value="ACA48519.1"/>
    <property type="molecule type" value="mRNA"/>
</dbReference>
<dbReference type="EMBL" id="AP002538">
    <property type="protein sequence ID" value="BAB03385.1"/>
    <property type="molecule type" value="Genomic_DNA"/>
</dbReference>
<dbReference type="EMBL" id="AP008207">
    <property type="protein sequence ID" value="BAH90889.1"/>
    <property type="status" value="ALT_SEQ"/>
    <property type="molecule type" value="Genomic_DNA"/>
</dbReference>
<dbReference type="EMBL" id="AP014957">
    <property type="protein sequence ID" value="BAS70200.1"/>
    <property type="molecule type" value="Genomic_DNA"/>
</dbReference>
<dbReference type="RefSeq" id="XP_015647214.1">
    <property type="nucleotide sequence ID" value="XM_015791728.1"/>
</dbReference>
<dbReference type="FunCoup" id="Q9LG97">
    <property type="interactions" value="43"/>
</dbReference>
<dbReference type="iPTMnet" id="Q9LG97"/>
<dbReference type="PaxDb" id="39947-Q9LG97"/>
<dbReference type="EnsemblPlants" id="Os01t0129200-01">
    <property type="protein sequence ID" value="Os01t0129200-01"/>
    <property type="gene ID" value="Os01g0129200"/>
</dbReference>
<dbReference type="Gramene" id="Os01t0129200-01">
    <property type="protein sequence ID" value="Os01t0129200-01"/>
    <property type="gene ID" value="Os01g0129200"/>
</dbReference>
<dbReference type="KEGG" id="dosa:Os01g0129000"/>
<dbReference type="eggNOG" id="ENOG502QUI4">
    <property type="taxonomic scope" value="Eukaryota"/>
</dbReference>
<dbReference type="HOGENOM" id="CLU_108250_0_0_1"/>
<dbReference type="InParanoid" id="Q9LG97"/>
<dbReference type="OMA" id="PYHHYLY"/>
<dbReference type="OrthoDB" id="1721933at2759"/>
<dbReference type="Proteomes" id="UP000000763">
    <property type="component" value="Chromosome 1"/>
</dbReference>
<dbReference type="Proteomes" id="UP000059680">
    <property type="component" value="Chromosome 1"/>
</dbReference>
<dbReference type="GO" id="GO:0005634">
    <property type="term" value="C:nucleus"/>
    <property type="evidence" value="ECO:0000314"/>
    <property type="project" value="UniProtKB"/>
</dbReference>
<dbReference type="GO" id="GO:0003700">
    <property type="term" value="F:DNA-binding transcription factor activity"/>
    <property type="evidence" value="ECO:0007669"/>
    <property type="project" value="InterPro"/>
</dbReference>
<dbReference type="GO" id="GO:0008270">
    <property type="term" value="F:zinc ion binding"/>
    <property type="evidence" value="ECO:0007669"/>
    <property type="project" value="UniProtKB-KW"/>
</dbReference>
<dbReference type="GO" id="GO:0030154">
    <property type="term" value="P:cell differentiation"/>
    <property type="evidence" value="ECO:0007669"/>
    <property type="project" value="UniProtKB-KW"/>
</dbReference>
<dbReference type="GO" id="GO:0048437">
    <property type="term" value="P:floral organ development"/>
    <property type="evidence" value="ECO:0000315"/>
    <property type="project" value="UniProtKB"/>
</dbReference>
<dbReference type="GO" id="GO:0008285">
    <property type="term" value="P:negative regulation of cell population proliferation"/>
    <property type="evidence" value="ECO:0000315"/>
    <property type="project" value="UniProtKB"/>
</dbReference>
<dbReference type="GO" id="GO:0010094">
    <property type="term" value="P:specification of carpel identity"/>
    <property type="evidence" value="ECO:0000315"/>
    <property type="project" value="UniProtKB"/>
</dbReference>
<dbReference type="GO" id="GO:0010097">
    <property type="term" value="P:specification of stamen identity"/>
    <property type="evidence" value="ECO:0000315"/>
    <property type="project" value="UniProtKB"/>
</dbReference>
<dbReference type="FunFam" id="3.30.160.60:FF:002425">
    <property type="entry name" value="Zinc finger protein STAMENLESS 1"/>
    <property type="match status" value="1"/>
</dbReference>
<dbReference type="Gene3D" id="3.30.160.60">
    <property type="entry name" value="Classic Zinc Finger"/>
    <property type="match status" value="1"/>
</dbReference>
<dbReference type="InterPro" id="IPR045320">
    <property type="entry name" value="JAGGED/SL1-like"/>
</dbReference>
<dbReference type="InterPro" id="IPR036236">
    <property type="entry name" value="Znf_C2H2_sf"/>
</dbReference>
<dbReference type="InterPro" id="IPR013087">
    <property type="entry name" value="Znf_C2H2_type"/>
</dbReference>
<dbReference type="PANTHER" id="PTHR45730">
    <property type="entry name" value="ZINC FINGER PROTEIN JAGGED"/>
    <property type="match status" value="1"/>
</dbReference>
<dbReference type="PANTHER" id="PTHR45730:SF32">
    <property type="entry name" value="ZINC FINGER PROTEIN JAGGED"/>
    <property type="match status" value="1"/>
</dbReference>
<dbReference type="SUPFAM" id="SSF57667">
    <property type="entry name" value="beta-beta-alpha zinc fingers"/>
    <property type="match status" value="1"/>
</dbReference>
<dbReference type="PROSITE" id="PS00028">
    <property type="entry name" value="ZINC_FINGER_C2H2_1"/>
    <property type="match status" value="1"/>
</dbReference>
<dbReference type="PROSITE" id="PS50157">
    <property type="entry name" value="ZINC_FINGER_C2H2_2"/>
    <property type="match status" value="1"/>
</dbReference>
<accession>Q9LG97</accession>
<accession>A0A0P0UY19</accession>
<accession>C7IXI9</accession>
<name>SL1_ORYSJ</name>
<reference key="1">
    <citation type="journal article" date="2009" name="Plant J.">
        <title>Rice OPEN BEAK is a negative regulator of class 1 knox genes and a positive regulator of class B floral homeotic gene.</title>
        <authorList>
            <person name="Horigome A."/>
            <person name="Nagasawa N."/>
            <person name="Ikeda K."/>
            <person name="Ito M."/>
            <person name="Itoh J."/>
            <person name="Nagato Y."/>
        </authorList>
    </citation>
    <scope>NUCLEOTIDE SEQUENCE [MRNA]</scope>
    <scope>FUNCTION</scope>
    <scope>SUBCELLULAR LOCATION</scope>
    <scope>TISSUE SPECIFICITY</scope>
    <scope>DISRUPTION PHENOTYPE</scope>
    <source>
        <strain>cv. Nipponbare</strain>
    </source>
</reference>
<reference key="2">
    <citation type="journal article" date="2009" name="Plant J.">
        <title>STAMENLESS 1, encoding a single C2H2 zinc finger protein, regulates floral organ identity in rice.</title>
        <authorList>
            <person name="Xiao H."/>
            <person name="Tang J."/>
            <person name="Li Y."/>
            <person name="Wang W."/>
            <person name="Li X."/>
            <person name="Jin L."/>
            <person name="Xie R."/>
            <person name="Luo H."/>
            <person name="Zhao X."/>
            <person name="Meng Z."/>
            <person name="He G."/>
            <person name="Zhu L."/>
        </authorList>
    </citation>
    <scope>NUCLEOTIDE SEQUENCE [MRNA]</scope>
    <scope>FUNCTION</scope>
    <scope>SUBCELLULAR LOCATION</scope>
    <scope>TISSUE SPECIFICITY</scope>
    <scope>DISRUPTION PHENOTYPE</scope>
    <source>
        <strain>cv. Jingxi 17</strain>
    </source>
</reference>
<reference key="3">
    <citation type="journal article" date="2002" name="Nature">
        <title>The genome sequence and structure of rice chromosome 1.</title>
        <authorList>
            <person name="Sasaki T."/>
            <person name="Matsumoto T."/>
            <person name="Yamamoto K."/>
            <person name="Sakata K."/>
            <person name="Baba T."/>
            <person name="Katayose Y."/>
            <person name="Wu J."/>
            <person name="Niimura Y."/>
            <person name="Cheng Z."/>
            <person name="Nagamura Y."/>
            <person name="Antonio B.A."/>
            <person name="Kanamori H."/>
            <person name="Hosokawa S."/>
            <person name="Masukawa M."/>
            <person name="Arikawa K."/>
            <person name="Chiden Y."/>
            <person name="Hayashi M."/>
            <person name="Okamoto M."/>
            <person name="Ando T."/>
            <person name="Aoki H."/>
            <person name="Arita K."/>
            <person name="Hamada M."/>
            <person name="Harada C."/>
            <person name="Hijishita S."/>
            <person name="Honda M."/>
            <person name="Ichikawa Y."/>
            <person name="Idonuma A."/>
            <person name="Iijima M."/>
            <person name="Ikeda M."/>
            <person name="Ikeno M."/>
            <person name="Ito S."/>
            <person name="Ito T."/>
            <person name="Ito Y."/>
            <person name="Ito Y."/>
            <person name="Iwabuchi A."/>
            <person name="Kamiya K."/>
            <person name="Karasawa W."/>
            <person name="Katagiri S."/>
            <person name="Kikuta A."/>
            <person name="Kobayashi N."/>
            <person name="Kono I."/>
            <person name="Machita K."/>
            <person name="Maehara T."/>
            <person name="Mizuno H."/>
            <person name="Mizubayashi T."/>
            <person name="Mukai Y."/>
            <person name="Nagasaki H."/>
            <person name="Nakashima M."/>
            <person name="Nakama Y."/>
            <person name="Nakamichi Y."/>
            <person name="Nakamura M."/>
            <person name="Namiki N."/>
            <person name="Negishi M."/>
            <person name="Ohta I."/>
            <person name="Ono N."/>
            <person name="Saji S."/>
            <person name="Sakai K."/>
            <person name="Shibata M."/>
            <person name="Shimokawa T."/>
            <person name="Shomura A."/>
            <person name="Song J."/>
            <person name="Takazaki Y."/>
            <person name="Terasawa K."/>
            <person name="Tsuji K."/>
            <person name="Waki K."/>
            <person name="Yamagata H."/>
            <person name="Yamane H."/>
            <person name="Yoshiki S."/>
            <person name="Yoshihara R."/>
            <person name="Yukawa K."/>
            <person name="Zhong H."/>
            <person name="Iwama H."/>
            <person name="Endo T."/>
            <person name="Ito H."/>
            <person name="Hahn J.H."/>
            <person name="Kim H.-I."/>
            <person name="Eun M.-Y."/>
            <person name="Yano M."/>
            <person name="Jiang J."/>
            <person name="Gojobori T."/>
        </authorList>
    </citation>
    <scope>NUCLEOTIDE SEQUENCE [LARGE SCALE GENOMIC DNA]</scope>
    <source>
        <strain>cv. Nipponbare</strain>
    </source>
</reference>
<reference key="4">
    <citation type="journal article" date="2005" name="Nature">
        <title>The map-based sequence of the rice genome.</title>
        <authorList>
            <consortium name="International rice genome sequencing project (IRGSP)"/>
        </authorList>
    </citation>
    <scope>NUCLEOTIDE SEQUENCE [LARGE SCALE GENOMIC DNA]</scope>
    <source>
        <strain>cv. Nipponbare</strain>
    </source>
</reference>
<reference key="5">
    <citation type="journal article" date="2008" name="Nucleic Acids Res.">
        <title>The rice annotation project database (RAP-DB): 2008 update.</title>
        <authorList>
            <consortium name="The rice annotation project (RAP)"/>
        </authorList>
    </citation>
    <scope>GENOME REANNOTATION</scope>
    <source>
        <strain>cv. Nipponbare</strain>
    </source>
</reference>
<reference key="6">
    <citation type="journal article" date="2013" name="Rice">
        <title>Improvement of the Oryza sativa Nipponbare reference genome using next generation sequence and optical map data.</title>
        <authorList>
            <person name="Kawahara Y."/>
            <person name="de la Bastide M."/>
            <person name="Hamilton J.P."/>
            <person name="Kanamori H."/>
            <person name="McCombie W.R."/>
            <person name="Ouyang S."/>
            <person name="Schwartz D.C."/>
            <person name="Tanaka T."/>
            <person name="Wu J."/>
            <person name="Zhou S."/>
            <person name="Childs K.L."/>
            <person name="Davidson R.M."/>
            <person name="Lin H."/>
            <person name="Quesada-Ocampo L."/>
            <person name="Vaillancourt B."/>
            <person name="Sakai H."/>
            <person name="Lee S.S."/>
            <person name="Kim J."/>
            <person name="Numa H."/>
            <person name="Itoh T."/>
            <person name="Buell C.R."/>
            <person name="Matsumoto T."/>
        </authorList>
    </citation>
    <scope>GENOME REANNOTATION</scope>
    <source>
        <strain>cv. Nipponbare</strain>
    </source>
</reference>
<proteinExistence type="evidence at transcript level"/>
<feature type="chain" id="PRO_0000407990" description="Zinc finger protein STAMENLESS 1">
    <location>
        <begin position="1"/>
        <end position="263"/>
    </location>
</feature>
<feature type="zinc finger region" description="C2H2-type" evidence="1">
    <location>
        <begin position="58"/>
        <end position="80"/>
    </location>
</feature>
<feature type="region of interest" description="Disordered" evidence="2">
    <location>
        <begin position="1"/>
        <end position="51"/>
    </location>
</feature>
<feature type="compositionally biased region" description="Low complexity" evidence="2">
    <location>
        <begin position="25"/>
        <end position="40"/>
    </location>
</feature>
<evidence type="ECO:0000255" key="1">
    <source>
        <dbReference type="PROSITE-ProRule" id="PRU00042"/>
    </source>
</evidence>
<evidence type="ECO:0000256" key="2">
    <source>
        <dbReference type="SAM" id="MobiDB-lite"/>
    </source>
</evidence>
<evidence type="ECO:0000269" key="3">
    <source>
    </source>
</evidence>
<evidence type="ECO:0000269" key="4">
    <source>
    </source>
</evidence>
<evidence type="ECO:0000305" key="5"/>
<organism>
    <name type="scientific">Oryza sativa subsp. japonica</name>
    <name type="common">Rice</name>
    <dbReference type="NCBI Taxonomy" id="39947"/>
    <lineage>
        <taxon>Eukaryota</taxon>
        <taxon>Viridiplantae</taxon>
        <taxon>Streptophyta</taxon>
        <taxon>Embryophyta</taxon>
        <taxon>Tracheophyta</taxon>
        <taxon>Spermatophyta</taxon>
        <taxon>Magnoliopsida</taxon>
        <taxon>Liliopsida</taxon>
        <taxon>Poales</taxon>
        <taxon>Poaceae</taxon>
        <taxon>BOP clade</taxon>
        <taxon>Oryzoideae</taxon>
        <taxon>Oryzeae</taxon>
        <taxon>Oryzinae</taxon>
        <taxon>Oryza</taxon>
        <taxon>Oryza sativa</taxon>
    </lineage>
</organism>
<gene>
    <name type="primary">SL1</name>
    <name type="synonym">OBP</name>
    <name type="ordered locus">Os01g0129200</name>
    <name type="ordered locus">LOC_Os01g03840</name>
    <name type="ORF">P0408F06.18</name>
</gene>
<sequence>MNSSRRQEGSPLDLNNLPDEFGKQTVESSTTTAASSAEASRVTKKKSNGGKDEAGKVYECRFCSLKFCKSQALGGHMNRHRQERETETLNRARQLVFGNDSLAAVGAQLNFRDVNMGGGGAAAPPPTMQMGGGGFRGGGVGGDPCIPLRPVQPRLSPPQPPPYHHYLYTTTAPPSALHPMSYPATYPAPPRHQQPAAVGDYVIGHAVSAGDALVAPPPPPHRASFSCFGAPLAAPPANVQPDNGNCNCSFGCGHSNRNVNAAS</sequence>